<reference evidence="6" key="1">
    <citation type="journal article" date="2009" name="PLoS Biol.">
        <title>Lineage-specific biology revealed by a finished genome assembly of the mouse.</title>
        <authorList>
            <person name="Church D.M."/>
            <person name="Goodstadt L."/>
            <person name="Hillier L.W."/>
            <person name="Zody M.C."/>
            <person name="Goldstein S."/>
            <person name="She X."/>
            <person name="Bult C.J."/>
            <person name="Agarwala R."/>
            <person name="Cherry J.L."/>
            <person name="DiCuccio M."/>
            <person name="Hlavina W."/>
            <person name="Kapustin Y."/>
            <person name="Meric P."/>
            <person name="Maglott D."/>
            <person name="Birtle Z."/>
            <person name="Marques A.C."/>
            <person name="Graves T."/>
            <person name="Zhou S."/>
            <person name="Teague B."/>
            <person name="Potamousis K."/>
            <person name="Churas C."/>
            <person name="Place M."/>
            <person name="Herschleb J."/>
            <person name="Runnheim R."/>
            <person name="Forrest D."/>
            <person name="Amos-Landgraf J."/>
            <person name="Schwartz D.C."/>
            <person name="Cheng Z."/>
            <person name="Lindblad-Toh K."/>
            <person name="Eichler E.E."/>
            <person name="Ponting C.P."/>
        </authorList>
    </citation>
    <scope>NUCLEOTIDE SEQUENCE [LARGE SCALE GENOMIC DNA]</scope>
    <source>
        <strain>C57BL/6J</strain>
    </source>
</reference>
<reference evidence="6" key="2">
    <citation type="journal article" date="2009" name="Gene Expr. Patterns">
        <title>Trim43a, Trim43b, and Trim43c: Novel mouse genes expressed specifically in mouse preimplantation embryos.</title>
        <authorList>
            <person name="Stanghellini I."/>
            <person name="Falco G."/>
            <person name="Lee S.L."/>
            <person name="Monti M."/>
            <person name="Ko M.S."/>
        </authorList>
    </citation>
    <scope>IDENTIFICATION</scope>
    <scope>DEVELOPMENTAL STAGE</scope>
</reference>
<accession>P86448</accession>
<sequence>MESDNLQDPQEETLTCSICQGIFMNPVYLKCGHKFCEACLLLFQEDIKFPAYCPMCMQPFNQEYINDISLKKQVSIVRKKRLMEYLNSEEHKCVTHKAKKMIFCDKSKILLCHLCSDSQEHSGHTHCSIDVAVQEKMEELLKHMDSLWRRLKIQQNYVEKERRTTLWWLKSMKLREEVIKRVYGKQCPPLSEERDQHIECLRHQSNTTLEELRKSEATIVHERNQLTEVYRELMTMSQRPYQELLVQDLDDLFRRSKLAAKLDMPQGMIPRLRAHSIPGLTARLNSFRVKISFKHSIMFGYTSLRPFDIRLLHESTSLDSAETHRVSWGKKSFSRGKYYWEVDLKDYRRWTVGVCKDPWLRGRSYVATPTDLFLECLRKDDHYILITRIGGEHYIEKPVGQVGVFLDCEGGYVSFVDVAKSSLILSYSPGTFHCAVRPFFSAVYT</sequence>
<name>TR43B_MOUSE</name>
<protein>
    <recommendedName>
        <fullName evidence="7">Tripartite motif-containing protein 43B</fullName>
    </recommendedName>
</protein>
<dbReference type="EMBL" id="CT030686">
    <property type="status" value="NOT_ANNOTATED_CDS"/>
    <property type="molecule type" value="Genomic_DNA"/>
</dbReference>
<dbReference type="CCDS" id="CCDS52884.1"/>
<dbReference type="RefSeq" id="NP_001164355.1">
    <property type="nucleotide sequence ID" value="NM_001170884.1"/>
</dbReference>
<dbReference type="SMR" id="P86448"/>
<dbReference type="FunCoup" id="P86448">
    <property type="interactions" value="111"/>
</dbReference>
<dbReference type="STRING" id="10090.ENSMUSP00000126594"/>
<dbReference type="iPTMnet" id="P86448"/>
<dbReference type="PhosphoSitePlus" id="P86448"/>
<dbReference type="PaxDb" id="10090-ENSMUSP00000126594"/>
<dbReference type="Ensembl" id="ENSMUST00000167113.8">
    <property type="protein sequence ID" value="ENSMUSP00000126594.2"/>
    <property type="gene ID" value="ENSMUSG00000079162.9"/>
</dbReference>
<dbReference type="GeneID" id="666747"/>
<dbReference type="KEGG" id="mmu:666747"/>
<dbReference type="UCSC" id="uc012gyc.1">
    <property type="organism name" value="mouse"/>
</dbReference>
<dbReference type="AGR" id="MGI:3648996"/>
<dbReference type="CTD" id="653192"/>
<dbReference type="MGI" id="MGI:3648996">
    <property type="gene designation" value="Trim43b"/>
</dbReference>
<dbReference type="VEuPathDB" id="HostDB:ENSMUSG00000079162"/>
<dbReference type="eggNOG" id="KOG2177">
    <property type="taxonomic scope" value="Eukaryota"/>
</dbReference>
<dbReference type="GeneTree" id="ENSGT00940000160005"/>
<dbReference type="HOGENOM" id="CLU_013137_0_3_1"/>
<dbReference type="InParanoid" id="P86448"/>
<dbReference type="OMA" id="TFHHEEE"/>
<dbReference type="OrthoDB" id="9448301at2759"/>
<dbReference type="PhylomeDB" id="P86448"/>
<dbReference type="TreeFam" id="TF338674"/>
<dbReference type="BioGRID-ORCS" id="666747">
    <property type="hits" value="1 hit in 45 CRISPR screens"/>
</dbReference>
<dbReference type="PRO" id="PR:P86448"/>
<dbReference type="Proteomes" id="UP000000589">
    <property type="component" value="Chromosome 9"/>
</dbReference>
<dbReference type="RNAct" id="P86448">
    <property type="molecule type" value="protein"/>
</dbReference>
<dbReference type="Bgee" id="ENSMUSG00000079162">
    <property type="expression patterns" value="Expressed in blastoderm cell in morula and 17 other cell types or tissues"/>
</dbReference>
<dbReference type="ExpressionAtlas" id="P86448">
    <property type="expression patterns" value="baseline and differential"/>
</dbReference>
<dbReference type="GO" id="GO:0008270">
    <property type="term" value="F:zinc ion binding"/>
    <property type="evidence" value="ECO:0007669"/>
    <property type="project" value="UniProtKB-KW"/>
</dbReference>
<dbReference type="CDD" id="cd23133">
    <property type="entry name" value="RING-HC_MmTRIM43-like"/>
    <property type="match status" value="1"/>
</dbReference>
<dbReference type="Gene3D" id="2.60.120.920">
    <property type="match status" value="1"/>
</dbReference>
<dbReference type="Gene3D" id="3.30.160.60">
    <property type="entry name" value="Classic Zinc Finger"/>
    <property type="match status" value="1"/>
</dbReference>
<dbReference type="Gene3D" id="3.30.40.10">
    <property type="entry name" value="Zinc/RING finger domain, C3HC4 (zinc finger)"/>
    <property type="match status" value="1"/>
</dbReference>
<dbReference type="InterPro" id="IPR001870">
    <property type="entry name" value="B30.2/SPRY"/>
</dbReference>
<dbReference type="InterPro" id="IPR043136">
    <property type="entry name" value="B30.2/SPRY_sf"/>
</dbReference>
<dbReference type="InterPro" id="IPR003879">
    <property type="entry name" value="Butyrophylin_SPRY"/>
</dbReference>
<dbReference type="InterPro" id="IPR013320">
    <property type="entry name" value="ConA-like_dom_sf"/>
</dbReference>
<dbReference type="InterPro" id="IPR003877">
    <property type="entry name" value="SPRY_dom"/>
</dbReference>
<dbReference type="InterPro" id="IPR050143">
    <property type="entry name" value="TRIM/RBCC"/>
</dbReference>
<dbReference type="InterPro" id="IPR000315">
    <property type="entry name" value="Znf_B-box"/>
</dbReference>
<dbReference type="InterPro" id="IPR018957">
    <property type="entry name" value="Znf_C3HC4_RING-type"/>
</dbReference>
<dbReference type="InterPro" id="IPR001841">
    <property type="entry name" value="Znf_RING"/>
</dbReference>
<dbReference type="InterPro" id="IPR013083">
    <property type="entry name" value="Znf_RING/FYVE/PHD"/>
</dbReference>
<dbReference type="InterPro" id="IPR017907">
    <property type="entry name" value="Znf_RING_CS"/>
</dbReference>
<dbReference type="PANTHER" id="PTHR24103">
    <property type="entry name" value="E3 UBIQUITIN-PROTEIN LIGASE TRIM"/>
    <property type="match status" value="1"/>
</dbReference>
<dbReference type="Pfam" id="PF00622">
    <property type="entry name" value="SPRY"/>
    <property type="match status" value="1"/>
</dbReference>
<dbReference type="Pfam" id="PF00097">
    <property type="entry name" value="zf-C3HC4"/>
    <property type="match status" value="1"/>
</dbReference>
<dbReference type="PRINTS" id="PR01407">
    <property type="entry name" value="BUTYPHLNCDUF"/>
</dbReference>
<dbReference type="SMART" id="SM00184">
    <property type="entry name" value="RING"/>
    <property type="match status" value="1"/>
</dbReference>
<dbReference type="SUPFAM" id="SSF57845">
    <property type="entry name" value="B-box zinc-binding domain"/>
    <property type="match status" value="1"/>
</dbReference>
<dbReference type="SUPFAM" id="SSF49899">
    <property type="entry name" value="Concanavalin A-like lectins/glucanases"/>
    <property type="match status" value="1"/>
</dbReference>
<dbReference type="SUPFAM" id="SSF57850">
    <property type="entry name" value="RING/U-box"/>
    <property type="match status" value="1"/>
</dbReference>
<dbReference type="PROSITE" id="PS50188">
    <property type="entry name" value="B302_SPRY"/>
    <property type="match status" value="1"/>
</dbReference>
<dbReference type="PROSITE" id="PS50119">
    <property type="entry name" value="ZF_BBOX"/>
    <property type="match status" value="1"/>
</dbReference>
<dbReference type="PROSITE" id="PS00518">
    <property type="entry name" value="ZF_RING_1"/>
    <property type="match status" value="1"/>
</dbReference>
<dbReference type="PROSITE" id="PS50089">
    <property type="entry name" value="ZF_RING_2"/>
    <property type="match status" value="1"/>
</dbReference>
<proteinExistence type="evidence at transcript level"/>
<comment type="developmental stage">
    <text evidence="5">Expression is restricted to preimplantation embryos and peaks at the 8-cell to morula stage.</text>
</comment>
<comment type="similarity">
    <text evidence="1">Belongs to the TRIM/RBCC family.</text>
</comment>
<keyword id="KW-0479">Metal-binding</keyword>
<keyword id="KW-1185">Reference proteome</keyword>
<keyword id="KW-0862">Zinc</keyword>
<keyword id="KW-0863">Zinc-finger</keyword>
<evidence type="ECO:0000255" key="1"/>
<evidence type="ECO:0000255" key="2">
    <source>
        <dbReference type="PROSITE-ProRule" id="PRU00024"/>
    </source>
</evidence>
<evidence type="ECO:0000255" key="3">
    <source>
        <dbReference type="PROSITE-ProRule" id="PRU00175"/>
    </source>
</evidence>
<evidence type="ECO:0000255" key="4">
    <source>
        <dbReference type="PROSITE-ProRule" id="PRU00548"/>
    </source>
</evidence>
<evidence type="ECO:0000269" key="5">
    <source>
    </source>
</evidence>
<evidence type="ECO:0000305" key="6"/>
<evidence type="ECO:0000312" key="7">
    <source>
        <dbReference type="MGI" id="MGI:3648996"/>
    </source>
</evidence>
<organism>
    <name type="scientific">Mus musculus</name>
    <name type="common">Mouse</name>
    <dbReference type="NCBI Taxonomy" id="10090"/>
    <lineage>
        <taxon>Eukaryota</taxon>
        <taxon>Metazoa</taxon>
        <taxon>Chordata</taxon>
        <taxon>Craniata</taxon>
        <taxon>Vertebrata</taxon>
        <taxon>Euteleostomi</taxon>
        <taxon>Mammalia</taxon>
        <taxon>Eutheria</taxon>
        <taxon>Euarchontoglires</taxon>
        <taxon>Glires</taxon>
        <taxon>Rodentia</taxon>
        <taxon>Myomorpha</taxon>
        <taxon>Muroidea</taxon>
        <taxon>Muridae</taxon>
        <taxon>Murinae</taxon>
        <taxon>Mus</taxon>
        <taxon>Mus</taxon>
    </lineage>
</organism>
<feature type="chain" id="PRO_0000392435" description="Tripartite motif-containing protein 43B">
    <location>
        <begin position="1"/>
        <end position="445"/>
    </location>
</feature>
<feature type="domain" description="B30.2/SPRY" evidence="4">
    <location>
        <begin position="271"/>
        <end position="445"/>
    </location>
</feature>
<feature type="zinc finger region" description="RING-type" evidence="3">
    <location>
        <begin position="16"/>
        <end position="57"/>
    </location>
</feature>
<feature type="zinc finger region" description="B box-type" evidence="2">
    <location>
        <begin position="88"/>
        <end position="129"/>
    </location>
</feature>
<feature type="binding site" evidence="2">
    <location>
        <position position="93"/>
    </location>
    <ligand>
        <name>Zn(2+)</name>
        <dbReference type="ChEBI" id="CHEBI:29105"/>
    </ligand>
</feature>
<feature type="binding site" evidence="2">
    <location>
        <position position="96"/>
    </location>
    <ligand>
        <name>Zn(2+)</name>
        <dbReference type="ChEBI" id="CHEBI:29105"/>
    </ligand>
</feature>
<feature type="binding site" evidence="2">
    <location>
        <position position="115"/>
    </location>
    <ligand>
        <name>Zn(2+)</name>
        <dbReference type="ChEBI" id="CHEBI:29105"/>
    </ligand>
</feature>
<feature type="binding site" evidence="2">
    <location>
        <position position="121"/>
    </location>
    <ligand>
        <name>Zn(2+)</name>
        <dbReference type="ChEBI" id="CHEBI:29105"/>
    </ligand>
</feature>
<gene>
    <name evidence="7" type="primary">Trim43b</name>
</gene>